<proteinExistence type="inferred from homology"/>
<feature type="chain" id="PRO_0000172460" description="Large ribosomal subunit protein bL32c">
    <location>
        <begin position="1"/>
        <end position="56"/>
    </location>
</feature>
<evidence type="ECO:0000255" key="1">
    <source>
        <dbReference type="HAMAP-Rule" id="MF_00340"/>
    </source>
</evidence>
<evidence type="ECO:0000305" key="2"/>
<organism>
    <name type="scientific">Huperzia lucidula</name>
    <name type="common">Shining clubmoss</name>
    <name type="synonym">Lycopodium lucidulum</name>
    <dbReference type="NCBI Taxonomy" id="37429"/>
    <lineage>
        <taxon>Eukaryota</taxon>
        <taxon>Viridiplantae</taxon>
        <taxon>Streptophyta</taxon>
        <taxon>Embryophyta</taxon>
        <taxon>Tracheophyta</taxon>
        <taxon>Lycopodiopsida</taxon>
        <taxon>Lycopodiales</taxon>
        <taxon>Lycopodiaceae</taxon>
        <taxon>Huperzioideae</taxon>
        <taxon>Huperzia</taxon>
    </lineage>
</organism>
<comment type="subcellular location">
    <subcellularLocation>
        <location>Plastid</location>
        <location>Chloroplast</location>
    </subcellularLocation>
</comment>
<comment type="similarity">
    <text evidence="1">Belongs to the bacterial ribosomal protein bL32 family.</text>
</comment>
<accession>Q5SD01</accession>
<geneLocation type="chloroplast"/>
<keyword id="KW-0150">Chloroplast</keyword>
<keyword id="KW-0934">Plastid</keyword>
<keyword id="KW-0687">Ribonucleoprotein</keyword>
<keyword id="KW-0689">Ribosomal protein</keyword>
<gene>
    <name evidence="1" type="primary">rpl32</name>
</gene>
<dbReference type="EMBL" id="AY660566">
    <property type="protein sequence ID" value="AAT80765.1"/>
    <property type="molecule type" value="Genomic_DNA"/>
</dbReference>
<dbReference type="RefSeq" id="YP_209569.1">
    <property type="nucleotide sequence ID" value="NC_006861.1"/>
</dbReference>
<dbReference type="SMR" id="Q5SD01"/>
<dbReference type="GeneID" id="3283814"/>
<dbReference type="GO" id="GO:0009507">
    <property type="term" value="C:chloroplast"/>
    <property type="evidence" value="ECO:0007669"/>
    <property type="project" value="UniProtKB-SubCell"/>
</dbReference>
<dbReference type="GO" id="GO:0015934">
    <property type="term" value="C:large ribosomal subunit"/>
    <property type="evidence" value="ECO:0007669"/>
    <property type="project" value="InterPro"/>
</dbReference>
<dbReference type="GO" id="GO:0003735">
    <property type="term" value="F:structural constituent of ribosome"/>
    <property type="evidence" value="ECO:0007669"/>
    <property type="project" value="InterPro"/>
</dbReference>
<dbReference type="GO" id="GO:0006412">
    <property type="term" value="P:translation"/>
    <property type="evidence" value="ECO:0007669"/>
    <property type="project" value="UniProtKB-UniRule"/>
</dbReference>
<dbReference type="HAMAP" id="MF_00340">
    <property type="entry name" value="Ribosomal_bL32"/>
    <property type="match status" value="1"/>
</dbReference>
<dbReference type="InterPro" id="IPR002677">
    <property type="entry name" value="Ribosomal_bL32"/>
</dbReference>
<dbReference type="InterPro" id="IPR044958">
    <property type="entry name" value="Ribosomal_bL32_plant/cyanobact"/>
</dbReference>
<dbReference type="InterPro" id="IPR011332">
    <property type="entry name" value="Ribosomal_zn-bd"/>
</dbReference>
<dbReference type="PANTHER" id="PTHR36083">
    <property type="entry name" value="50S RIBOSOMAL PROTEIN L32, CHLOROPLASTIC"/>
    <property type="match status" value="1"/>
</dbReference>
<dbReference type="PANTHER" id="PTHR36083:SF1">
    <property type="entry name" value="LARGE RIBOSOMAL SUBUNIT PROTEIN BL32C"/>
    <property type="match status" value="1"/>
</dbReference>
<dbReference type="Pfam" id="PF01783">
    <property type="entry name" value="Ribosomal_L32p"/>
    <property type="match status" value="1"/>
</dbReference>
<dbReference type="SUPFAM" id="SSF57829">
    <property type="entry name" value="Zn-binding ribosomal proteins"/>
    <property type="match status" value="1"/>
</dbReference>
<sequence length="56" mass="6195">MAVPKKRTSKSKKKTRKAVWTAKADKAAVEAFSRARSVLTGRSSSFYYAANNDISK</sequence>
<protein>
    <recommendedName>
        <fullName evidence="1">Large ribosomal subunit protein bL32c</fullName>
    </recommendedName>
    <alternativeName>
        <fullName evidence="2">50S ribosomal protein L32, chloroplastic</fullName>
    </alternativeName>
</protein>
<name>RK32_HUPLU</name>
<reference key="1">
    <citation type="journal article" date="2005" name="Gene">
        <title>The first complete chloroplast genome sequence of a lycophyte, Huperzia lucidula (Lycopodiaceae).</title>
        <authorList>
            <person name="Wolf P.G."/>
            <person name="Karol K.G."/>
            <person name="Mandoli D.F."/>
            <person name="Kuehl J.V."/>
            <person name="Arumuganathan K."/>
            <person name="Ellis M.W."/>
            <person name="Mishler B.D."/>
            <person name="Kelch D.G."/>
            <person name="Olmstead R.G."/>
            <person name="Boore J.L."/>
        </authorList>
    </citation>
    <scope>NUCLEOTIDE SEQUENCE [LARGE SCALE GENOMIC DNA]</scope>
</reference>